<accession>A8AQS4</accession>
<proteinExistence type="inferred from homology"/>
<name>CYSG_CITK8</name>
<sequence length="457" mass="49822">MDHLPIFCQLRDRDCLLVGGGDVAERKARLLLEAGARLTVNALAFIPQFTVWANEGMLTLVEGAFEESLLDGCWLAIAATDDDAVNQQVSEAAESRRIFCNVVDAPKAASFIMPSIIDRSPLMVAVSSGGTSPVLARLLREKLESLLPQHLGQVAHYAGQLRARVKKQFATMGERRRFWEKLFINDRLAQSLANADAKAVSEITEQMLSEPLDHRGEVVLVGAGPGDAGLLTLKGLQQIQQADVVVYDRLVSDDIMNLVRRDADRVFVGKRAGYHCVPQEEINQILLREAQKGRRVVRLKGGDPFIFGRGGEELETLCHAGIPFSVVPGITAASGCSAYSGVPLTHRDYAQSVRLVTGHLKTGGELDWENLAAEKQTLVFYMGLNQAATIQEKLIAFGMQADMPVALVENGTAVKQRVVSGVLAQLGELAKQVESPALIIVGRVVALRDKLNWFSNH</sequence>
<organism>
    <name type="scientific">Citrobacter koseri (strain ATCC BAA-895 / CDC 4225-83 / SGSC4696)</name>
    <dbReference type="NCBI Taxonomy" id="290338"/>
    <lineage>
        <taxon>Bacteria</taxon>
        <taxon>Pseudomonadati</taxon>
        <taxon>Pseudomonadota</taxon>
        <taxon>Gammaproteobacteria</taxon>
        <taxon>Enterobacterales</taxon>
        <taxon>Enterobacteriaceae</taxon>
        <taxon>Citrobacter</taxon>
    </lineage>
</organism>
<dbReference type="EC" id="2.1.1.107" evidence="1"/>
<dbReference type="EC" id="1.3.1.76" evidence="1"/>
<dbReference type="EC" id="4.99.1.4" evidence="1"/>
<dbReference type="EMBL" id="CP000822">
    <property type="protein sequence ID" value="ABV15837.1"/>
    <property type="molecule type" value="Genomic_DNA"/>
</dbReference>
<dbReference type="RefSeq" id="WP_012135478.1">
    <property type="nucleotide sequence ID" value="NC_009792.1"/>
</dbReference>
<dbReference type="SMR" id="A8AQS4"/>
<dbReference type="STRING" id="290338.CKO_04792"/>
<dbReference type="GeneID" id="45138296"/>
<dbReference type="KEGG" id="cko:CKO_04792"/>
<dbReference type="HOGENOM" id="CLU_011276_2_0_6"/>
<dbReference type="OrthoDB" id="9815856at2"/>
<dbReference type="UniPathway" id="UPA00148">
    <property type="reaction ID" value="UER00211"/>
</dbReference>
<dbReference type="UniPathway" id="UPA00148">
    <property type="reaction ID" value="UER00222"/>
</dbReference>
<dbReference type="UniPathway" id="UPA00262">
    <property type="reaction ID" value="UER00211"/>
</dbReference>
<dbReference type="UniPathway" id="UPA00262">
    <property type="reaction ID" value="UER00222"/>
</dbReference>
<dbReference type="UniPathway" id="UPA00262">
    <property type="reaction ID" value="UER00376"/>
</dbReference>
<dbReference type="Proteomes" id="UP000008148">
    <property type="component" value="Chromosome"/>
</dbReference>
<dbReference type="GO" id="GO:0051287">
    <property type="term" value="F:NAD binding"/>
    <property type="evidence" value="ECO:0007669"/>
    <property type="project" value="InterPro"/>
</dbReference>
<dbReference type="GO" id="GO:0043115">
    <property type="term" value="F:precorrin-2 dehydrogenase activity"/>
    <property type="evidence" value="ECO:0007669"/>
    <property type="project" value="UniProtKB-UniRule"/>
</dbReference>
<dbReference type="GO" id="GO:0051266">
    <property type="term" value="F:sirohydrochlorin ferrochelatase activity"/>
    <property type="evidence" value="ECO:0007669"/>
    <property type="project" value="UniProtKB-EC"/>
</dbReference>
<dbReference type="GO" id="GO:0004851">
    <property type="term" value="F:uroporphyrin-III C-methyltransferase activity"/>
    <property type="evidence" value="ECO:0007669"/>
    <property type="project" value="UniProtKB-UniRule"/>
</dbReference>
<dbReference type="GO" id="GO:0009236">
    <property type="term" value="P:cobalamin biosynthetic process"/>
    <property type="evidence" value="ECO:0007669"/>
    <property type="project" value="UniProtKB-UniRule"/>
</dbReference>
<dbReference type="GO" id="GO:0032259">
    <property type="term" value="P:methylation"/>
    <property type="evidence" value="ECO:0007669"/>
    <property type="project" value="UniProtKB-KW"/>
</dbReference>
<dbReference type="GO" id="GO:0019354">
    <property type="term" value="P:siroheme biosynthetic process"/>
    <property type="evidence" value="ECO:0007669"/>
    <property type="project" value="UniProtKB-UniRule"/>
</dbReference>
<dbReference type="CDD" id="cd11642">
    <property type="entry name" value="SUMT"/>
    <property type="match status" value="1"/>
</dbReference>
<dbReference type="FunFam" id="1.10.8.210:FF:000001">
    <property type="entry name" value="Siroheme synthase"/>
    <property type="match status" value="1"/>
</dbReference>
<dbReference type="FunFam" id="3.30.160.110:FF:000001">
    <property type="entry name" value="Siroheme synthase"/>
    <property type="match status" value="1"/>
</dbReference>
<dbReference type="FunFam" id="3.30.950.10:FF:000001">
    <property type="entry name" value="Siroheme synthase"/>
    <property type="match status" value="1"/>
</dbReference>
<dbReference type="FunFam" id="3.40.1010.10:FF:000001">
    <property type="entry name" value="Siroheme synthase"/>
    <property type="match status" value="1"/>
</dbReference>
<dbReference type="FunFam" id="3.40.50.720:FF:000092">
    <property type="entry name" value="Siroheme synthase"/>
    <property type="match status" value="1"/>
</dbReference>
<dbReference type="Gene3D" id="3.40.1010.10">
    <property type="entry name" value="Cobalt-precorrin-4 Transmethylase, Domain 1"/>
    <property type="match status" value="1"/>
</dbReference>
<dbReference type="Gene3D" id="3.30.950.10">
    <property type="entry name" value="Methyltransferase, Cobalt-precorrin-4 Transmethylase, Domain 2"/>
    <property type="match status" value="1"/>
</dbReference>
<dbReference type="Gene3D" id="3.40.50.720">
    <property type="entry name" value="NAD(P)-binding Rossmann-like Domain"/>
    <property type="match status" value="1"/>
</dbReference>
<dbReference type="Gene3D" id="1.10.8.210">
    <property type="entry name" value="Sirohaem synthase, dimerisation domain"/>
    <property type="match status" value="1"/>
</dbReference>
<dbReference type="Gene3D" id="3.30.160.110">
    <property type="entry name" value="Siroheme synthase, domain 2"/>
    <property type="match status" value="1"/>
</dbReference>
<dbReference type="HAMAP" id="MF_01646">
    <property type="entry name" value="Siroheme_synth"/>
    <property type="match status" value="1"/>
</dbReference>
<dbReference type="InterPro" id="IPR000878">
    <property type="entry name" value="4pyrrol_Mease"/>
</dbReference>
<dbReference type="InterPro" id="IPR035996">
    <property type="entry name" value="4pyrrol_Methylase_sf"/>
</dbReference>
<dbReference type="InterPro" id="IPR014777">
    <property type="entry name" value="4pyrrole_Mease_sub1"/>
</dbReference>
<dbReference type="InterPro" id="IPR014776">
    <property type="entry name" value="4pyrrole_Mease_sub2"/>
</dbReference>
<dbReference type="InterPro" id="IPR006366">
    <property type="entry name" value="CobA/CysG_C"/>
</dbReference>
<dbReference type="InterPro" id="IPR036291">
    <property type="entry name" value="NAD(P)-bd_dom_sf"/>
</dbReference>
<dbReference type="InterPro" id="IPR050161">
    <property type="entry name" value="Siro_Cobalamin_biosynth"/>
</dbReference>
<dbReference type="InterPro" id="IPR037115">
    <property type="entry name" value="Sirohaem_synt_dimer_dom_sf"/>
</dbReference>
<dbReference type="InterPro" id="IPR012409">
    <property type="entry name" value="Sirohaem_synth"/>
</dbReference>
<dbReference type="InterPro" id="IPR028281">
    <property type="entry name" value="Sirohaem_synthase_central"/>
</dbReference>
<dbReference type="InterPro" id="IPR019478">
    <property type="entry name" value="Sirohaem_synthase_dimer_dom"/>
</dbReference>
<dbReference type="InterPro" id="IPR006367">
    <property type="entry name" value="Sirohaem_synthase_N"/>
</dbReference>
<dbReference type="InterPro" id="IPR003043">
    <property type="entry name" value="Uropor_MeTrfase_CS"/>
</dbReference>
<dbReference type="NCBIfam" id="TIGR01469">
    <property type="entry name" value="cobA_cysG_Cterm"/>
    <property type="match status" value="1"/>
</dbReference>
<dbReference type="NCBIfam" id="TIGR01470">
    <property type="entry name" value="cysG_Nterm"/>
    <property type="match status" value="1"/>
</dbReference>
<dbReference type="NCBIfam" id="NF004790">
    <property type="entry name" value="PRK06136.1"/>
    <property type="match status" value="1"/>
</dbReference>
<dbReference type="NCBIfam" id="NF007922">
    <property type="entry name" value="PRK10637.1"/>
    <property type="match status" value="1"/>
</dbReference>
<dbReference type="PANTHER" id="PTHR45790:SF1">
    <property type="entry name" value="SIROHEME SYNTHASE"/>
    <property type="match status" value="1"/>
</dbReference>
<dbReference type="PANTHER" id="PTHR45790">
    <property type="entry name" value="SIROHEME SYNTHASE-RELATED"/>
    <property type="match status" value="1"/>
</dbReference>
<dbReference type="Pfam" id="PF10414">
    <property type="entry name" value="CysG_dimeriser"/>
    <property type="match status" value="1"/>
</dbReference>
<dbReference type="Pfam" id="PF13241">
    <property type="entry name" value="NAD_binding_7"/>
    <property type="match status" value="1"/>
</dbReference>
<dbReference type="Pfam" id="PF14824">
    <property type="entry name" value="Sirohm_synth_M"/>
    <property type="match status" value="1"/>
</dbReference>
<dbReference type="Pfam" id="PF00590">
    <property type="entry name" value="TP_methylase"/>
    <property type="match status" value="1"/>
</dbReference>
<dbReference type="PIRSF" id="PIRSF036426">
    <property type="entry name" value="Sirohaem_synth"/>
    <property type="match status" value="1"/>
</dbReference>
<dbReference type="SUPFAM" id="SSF51735">
    <property type="entry name" value="NAD(P)-binding Rossmann-fold domains"/>
    <property type="match status" value="1"/>
</dbReference>
<dbReference type="SUPFAM" id="SSF75615">
    <property type="entry name" value="Siroheme synthase middle domains-like"/>
    <property type="match status" value="1"/>
</dbReference>
<dbReference type="SUPFAM" id="SSF53790">
    <property type="entry name" value="Tetrapyrrole methylase"/>
    <property type="match status" value="1"/>
</dbReference>
<dbReference type="PROSITE" id="PS00839">
    <property type="entry name" value="SUMT_1"/>
    <property type="match status" value="1"/>
</dbReference>
<dbReference type="PROSITE" id="PS00840">
    <property type="entry name" value="SUMT_2"/>
    <property type="match status" value="1"/>
</dbReference>
<evidence type="ECO:0000255" key="1">
    <source>
        <dbReference type="HAMAP-Rule" id="MF_01646"/>
    </source>
</evidence>
<gene>
    <name evidence="1" type="primary">cysG</name>
    <name type="ordered locus">CKO_04792</name>
</gene>
<comment type="function">
    <text evidence="1">Multifunctional enzyme that catalyzes the SAM-dependent methylations of uroporphyrinogen III at position C-2 and C-7 to form precorrin-2 via precorrin-1. Then it catalyzes the NAD-dependent ring dehydrogenation of precorrin-2 to yield sirohydrochlorin. Finally, it catalyzes the ferrochelation of sirohydrochlorin to yield siroheme.</text>
</comment>
<comment type="catalytic activity">
    <reaction evidence="1">
        <text>uroporphyrinogen III + 2 S-adenosyl-L-methionine = precorrin-2 + 2 S-adenosyl-L-homocysteine + H(+)</text>
        <dbReference type="Rhea" id="RHEA:32459"/>
        <dbReference type="ChEBI" id="CHEBI:15378"/>
        <dbReference type="ChEBI" id="CHEBI:57308"/>
        <dbReference type="ChEBI" id="CHEBI:57856"/>
        <dbReference type="ChEBI" id="CHEBI:58827"/>
        <dbReference type="ChEBI" id="CHEBI:59789"/>
        <dbReference type="EC" id="2.1.1.107"/>
    </reaction>
</comment>
<comment type="catalytic activity">
    <reaction evidence="1">
        <text>precorrin-2 + NAD(+) = sirohydrochlorin + NADH + 2 H(+)</text>
        <dbReference type="Rhea" id="RHEA:15613"/>
        <dbReference type="ChEBI" id="CHEBI:15378"/>
        <dbReference type="ChEBI" id="CHEBI:57540"/>
        <dbReference type="ChEBI" id="CHEBI:57945"/>
        <dbReference type="ChEBI" id="CHEBI:58351"/>
        <dbReference type="ChEBI" id="CHEBI:58827"/>
        <dbReference type="EC" id="1.3.1.76"/>
    </reaction>
</comment>
<comment type="catalytic activity">
    <reaction evidence="1">
        <text>siroheme + 2 H(+) = sirohydrochlorin + Fe(2+)</text>
        <dbReference type="Rhea" id="RHEA:24360"/>
        <dbReference type="ChEBI" id="CHEBI:15378"/>
        <dbReference type="ChEBI" id="CHEBI:29033"/>
        <dbReference type="ChEBI" id="CHEBI:58351"/>
        <dbReference type="ChEBI" id="CHEBI:60052"/>
        <dbReference type="EC" id="4.99.1.4"/>
    </reaction>
</comment>
<comment type="pathway">
    <text evidence="1">Cofactor biosynthesis; adenosylcobalamin biosynthesis; precorrin-2 from uroporphyrinogen III: step 1/1.</text>
</comment>
<comment type="pathway">
    <text evidence="1">Cofactor biosynthesis; adenosylcobalamin biosynthesis; sirohydrochlorin from precorrin-2: step 1/1.</text>
</comment>
<comment type="pathway">
    <text evidence="1">Porphyrin-containing compound metabolism; siroheme biosynthesis; precorrin-2 from uroporphyrinogen III: step 1/1.</text>
</comment>
<comment type="pathway">
    <text evidence="1">Porphyrin-containing compound metabolism; siroheme biosynthesis; siroheme from sirohydrochlorin: step 1/1.</text>
</comment>
<comment type="pathway">
    <text evidence="1">Porphyrin-containing compound metabolism; siroheme biosynthesis; sirohydrochlorin from precorrin-2: step 1/1.</text>
</comment>
<comment type="similarity">
    <text evidence="1">In the N-terminal section; belongs to the precorrin-2 dehydrogenase / sirohydrochlorin ferrochelatase family.</text>
</comment>
<comment type="similarity">
    <text evidence="1">In the C-terminal section; belongs to the precorrin methyltransferase family.</text>
</comment>
<protein>
    <recommendedName>
        <fullName evidence="1">Siroheme synthase</fullName>
    </recommendedName>
    <domain>
        <recommendedName>
            <fullName evidence="1">Uroporphyrinogen-III C-methyltransferase</fullName>
            <shortName evidence="1">Urogen III methylase</shortName>
            <ecNumber evidence="1">2.1.1.107</ecNumber>
        </recommendedName>
        <alternativeName>
            <fullName evidence="1">SUMT</fullName>
        </alternativeName>
        <alternativeName>
            <fullName evidence="1">Uroporphyrinogen III methylase</fullName>
            <shortName evidence="1">UROM</shortName>
        </alternativeName>
    </domain>
    <domain>
        <recommendedName>
            <fullName evidence="1">Precorrin-2 dehydrogenase</fullName>
            <ecNumber evidence="1">1.3.1.76</ecNumber>
        </recommendedName>
    </domain>
    <domain>
        <recommendedName>
            <fullName evidence="1">Sirohydrochlorin ferrochelatase</fullName>
            <ecNumber evidence="1">4.99.1.4</ecNumber>
        </recommendedName>
    </domain>
</protein>
<keyword id="KW-0169">Cobalamin biosynthesis</keyword>
<keyword id="KW-0456">Lyase</keyword>
<keyword id="KW-0489">Methyltransferase</keyword>
<keyword id="KW-0511">Multifunctional enzyme</keyword>
<keyword id="KW-0520">NAD</keyword>
<keyword id="KW-0560">Oxidoreductase</keyword>
<keyword id="KW-0597">Phosphoprotein</keyword>
<keyword id="KW-0627">Porphyrin biosynthesis</keyword>
<keyword id="KW-1185">Reference proteome</keyword>
<keyword id="KW-0949">S-adenosyl-L-methionine</keyword>
<keyword id="KW-0808">Transferase</keyword>
<feature type="chain" id="PRO_0000330501" description="Siroheme synthase">
    <location>
        <begin position="1"/>
        <end position="457"/>
    </location>
</feature>
<feature type="region of interest" description="Precorrin-2 dehydrogenase /sirohydrochlorin ferrochelatase" evidence="1">
    <location>
        <begin position="1"/>
        <end position="204"/>
    </location>
</feature>
<feature type="region of interest" description="Uroporphyrinogen-III C-methyltransferase" evidence="1">
    <location>
        <begin position="216"/>
        <end position="457"/>
    </location>
</feature>
<feature type="active site" description="Proton acceptor" evidence="1">
    <location>
        <position position="248"/>
    </location>
</feature>
<feature type="active site" description="Proton donor" evidence="1">
    <location>
        <position position="270"/>
    </location>
</feature>
<feature type="binding site" evidence="1">
    <location>
        <begin position="22"/>
        <end position="23"/>
    </location>
    <ligand>
        <name>NAD(+)</name>
        <dbReference type="ChEBI" id="CHEBI:57540"/>
    </ligand>
</feature>
<feature type="binding site" evidence="1">
    <location>
        <begin position="43"/>
        <end position="44"/>
    </location>
    <ligand>
        <name>NAD(+)</name>
        <dbReference type="ChEBI" id="CHEBI:57540"/>
    </ligand>
</feature>
<feature type="binding site" evidence="1">
    <location>
        <position position="225"/>
    </location>
    <ligand>
        <name>S-adenosyl-L-methionine</name>
        <dbReference type="ChEBI" id="CHEBI:59789"/>
    </ligand>
</feature>
<feature type="binding site" evidence="1">
    <location>
        <begin position="301"/>
        <end position="303"/>
    </location>
    <ligand>
        <name>S-adenosyl-L-methionine</name>
        <dbReference type="ChEBI" id="CHEBI:59789"/>
    </ligand>
</feature>
<feature type="binding site" evidence="1">
    <location>
        <position position="306"/>
    </location>
    <ligand>
        <name>S-adenosyl-L-methionine</name>
        <dbReference type="ChEBI" id="CHEBI:59789"/>
    </ligand>
</feature>
<feature type="binding site" evidence="1">
    <location>
        <begin position="331"/>
        <end position="332"/>
    </location>
    <ligand>
        <name>S-adenosyl-L-methionine</name>
        <dbReference type="ChEBI" id="CHEBI:59789"/>
    </ligand>
</feature>
<feature type="binding site" evidence="1">
    <location>
        <position position="382"/>
    </location>
    <ligand>
        <name>S-adenosyl-L-methionine</name>
        <dbReference type="ChEBI" id="CHEBI:59789"/>
    </ligand>
</feature>
<feature type="binding site" evidence="1">
    <location>
        <position position="411"/>
    </location>
    <ligand>
        <name>S-adenosyl-L-methionine</name>
        <dbReference type="ChEBI" id="CHEBI:59789"/>
    </ligand>
</feature>
<feature type="modified residue" description="Phosphoserine" evidence="1">
    <location>
        <position position="128"/>
    </location>
</feature>
<reference key="1">
    <citation type="submission" date="2007-08" db="EMBL/GenBank/DDBJ databases">
        <authorList>
            <consortium name="The Citrobacter koseri Genome Sequencing Project"/>
            <person name="McClelland M."/>
            <person name="Sanderson E.K."/>
            <person name="Porwollik S."/>
            <person name="Spieth J."/>
            <person name="Clifton W.S."/>
            <person name="Latreille P."/>
            <person name="Courtney L."/>
            <person name="Wang C."/>
            <person name="Pepin K."/>
            <person name="Bhonagiri V."/>
            <person name="Nash W."/>
            <person name="Johnson M."/>
            <person name="Thiruvilangam P."/>
            <person name="Wilson R."/>
        </authorList>
    </citation>
    <scope>NUCLEOTIDE SEQUENCE [LARGE SCALE GENOMIC DNA]</scope>
    <source>
        <strain>ATCC BAA-895 / CDC 4225-83 / SGSC4696</strain>
    </source>
</reference>